<protein>
    <recommendedName>
        <fullName evidence="1">Phosphate import ATP-binding protein PstB 2</fullName>
        <ecNumber evidence="1">7.3.2.1</ecNumber>
    </recommendedName>
    <alternativeName>
        <fullName evidence="1">ABC phosphate transporter 2</fullName>
    </alternativeName>
    <alternativeName>
        <fullName evidence="1">Phosphate-transporting ATPase 2</fullName>
    </alternativeName>
</protein>
<evidence type="ECO:0000255" key="1">
    <source>
        <dbReference type="HAMAP-Rule" id="MF_01702"/>
    </source>
</evidence>
<dbReference type="EC" id="7.3.2.1" evidence="1"/>
<dbReference type="EMBL" id="AE003853">
    <property type="protein sequence ID" value="AAF95987.1"/>
    <property type="molecule type" value="Genomic_DNA"/>
</dbReference>
<dbReference type="PIR" id="E82504">
    <property type="entry name" value="E82504"/>
</dbReference>
<dbReference type="RefSeq" id="NP_232474.1">
    <property type="nucleotide sequence ID" value="NC_002506.1"/>
</dbReference>
<dbReference type="SMR" id="Q9KN92"/>
<dbReference type="STRING" id="243277.VC_A0073"/>
<dbReference type="DNASU" id="2612079"/>
<dbReference type="EnsemblBacteria" id="AAF95987">
    <property type="protein sequence ID" value="AAF95987"/>
    <property type="gene ID" value="VC_A0073"/>
</dbReference>
<dbReference type="KEGG" id="vch:VC_A0073"/>
<dbReference type="PATRIC" id="fig|243277.26.peg.2716"/>
<dbReference type="eggNOG" id="COG1117">
    <property type="taxonomic scope" value="Bacteria"/>
</dbReference>
<dbReference type="HOGENOM" id="CLU_000604_1_22_6"/>
<dbReference type="Proteomes" id="UP000000584">
    <property type="component" value="Chromosome 2"/>
</dbReference>
<dbReference type="GO" id="GO:0005886">
    <property type="term" value="C:plasma membrane"/>
    <property type="evidence" value="ECO:0007669"/>
    <property type="project" value="UniProtKB-SubCell"/>
</dbReference>
<dbReference type="GO" id="GO:0005524">
    <property type="term" value="F:ATP binding"/>
    <property type="evidence" value="ECO:0007669"/>
    <property type="project" value="UniProtKB-KW"/>
</dbReference>
<dbReference type="GO" id="GO:0016887">
    <property type="term" value="F:ATP hydrolysis activity"/>
    <property type="evidence" value="ECO:0007669"/>
    <property type="project" value="InterPro"/>
</dbReference>
<dbReference type="GO" id="GO:0015415">
    <property type="term" value="F:ATPase-coupled phosphate ion transmembrane transporter activity"/>
    <property type="evidence" value="ECO:0007669"/>
    <property type="project" value="UniProtKB-EC"/>
</dbReference>
<dbReference type="GO" id="GO:0035435">
    <property type="term" value="P:phosphate ion transmembrane transport"/>
    <property type="evidence" value="ECO:0007669"/>
    <property type="project" value="InterPro"/>
</dbReference>
<dbReference type="CDD" id="cd03260">
    <property type="entry name" value="ABC_PstB_phosphate_transporter"/>
    <property type="match status" value="1"/>
</dbReference>
<dbReference type="FunFam" id="3.40.50.300:FF:000132">
    <property type="entry name" value="Phosphate import ATP-binding protein PstB"/>
    <property type="match status" value="1"/>
</dbReference>
<dbReference type="Gene3D" id="3.40.50.300">
    <property type="entry name" value="P-loop containing nucleotide triphosphate hydrolases"/>
    <property type="match status" value="1"/>
</dbReference>
<dbReference type="InterPro" id="IPR003593">
    <property type="entry name" value="AAA+_ATPase"/>
</dbReference>
<dbReference type="InterPro" id="IPR003439">
    <property type="entry name" value="ABC_transporter-like_ATP-bd"/>
</dbReference>
<dbReference type="InterPro" id="IPR017871">
    <property type="entry name" value="ABC_transporter-like_CS"/>
</dbReference>
<dbReference type="InterPro" id="IPR027417">
    <property type="entry name" value="P-loop_NTPase"/>
</dbReference>
<dbReference type="InterPro" id="IPR005670">
    <property type="entry name" value="PstB-like"/>
</dbReference>
<dbReference type="NCBIfam" id="TIGR00972">
    <property type="entry name" value="3a0107s01c2"/>
    <property type="match status" value="1"/>
</dbReference>
<dbReference type="PANTHER" id="PTHR43423">
    <property type="entry name" value="ABC TRANSPORTER I FAMILY MEMBER 17"/>
    <property type="match status" value="1"/>
</dbReference>
<dbReference type="PANTHER" id="PTHR43423:SF1">
    <property type="entry name" value="ABC TRANSPORTER I FAMILY MEMBER 17"/>
    <property type="match status" value="1"/>
</dbReference>
<dbReference type="Pfam" id="PF00005">
    <property type="entry name" value="ABC_tran"/>
    <property type="match status" value="1"/>
</dbReference>
<dbReference type="SMART" id="SM00382">
    <property type="entry name" value="AAA"/>
    <property type="match status" value="1"/>
</dbReference>
<dbReference type="SUPFAM" id="SSF52540">
    <property type="entry name" value="P-loop containing nucleoside triphosphate hydrolases"/>
    <property type="match status" value="1"/>
</dbReference>
<dbReference type="PROSITE" id="PS00211">
    <property type="entry name" value="ABC_TRANSPORTER_1"/>
    <property type="match status" value="1"/>
</dbReference>
<dbReference type="PROSITE" id="PS50893">
    <property type="entry name" value="ABC_TRANSPORTER_2"/>
    <property type="match status" value="1"/>
</dbReference>
<dbReference type="PROSITE" id="PS51238">
    <property type="entry name" value="PSTB"/>
    <property type="match status" value="1"/>
</dbReference>
<organism>
    <name type="scientific">Vibrio cholerae serotype O1 (strain ATCC 39315 / El Tor Inaba N16961)</name>
    <dbReference type="NCBI Taxonomy" id="243277"/>
    <lineage>
        <taxon>Bacteria</taxon>
        <taxon>Pseudomonadati</taxon>
        <taxon>Pseudomonadota</taxon>
        <taxon>Gammaproteobacteria</taxon>
        <taxon>Vibrionales</taxon>
        <taxon>Vibrionaceae</taxon>
        <taxon>Vibrio</taxon>
    </lineage>
</organism>
<gene>
    <name evidence="1" type="primary">pstB2</name>
    <name type="ordered locus">VC_A0073</name>
</gene>
<proteinExistence type="inferred from homology"/>
<feature type="chain" id="PRO_0000092925" description="Phosphate import ATP-binding protein PstB 2">
    <location>
        <begin position="1"/>
        <end position="251"/>
    </location>
</feature>
<feature type="domain" description="ABC transporter" evidence="1">
    <location>
        <begin position="6"/>
        <end position="246"/>
    </location>
</feature>
<feature type="binding site" evidence="1">
    <location>
        <begin position="38"/>
        <end position="45"/>
    </location>
    <ligand>
        <name>ATP</name>
        <dbReference type="ChEBI" id="CHEBI:30616"/>
    </ligand>
</feature>
<sequence>MKTTKFNIENLDLFYGENQALKSINLPIPTRQVTALIGPSGCGKSTLLRCLNRMNDLIEGVTITGKLTMDGQDVYGNIDVSDLRIRVGMVFQKPNPFPMSIYENVAYGLRAQGIKDKKHLDEVVERSLRGAALWDEVKDRLKSHAFGLSGGQQQRLCIARTIAMEPDVILMDEPTSALDPIATHKIEELMEDLKKNYTIVIVTHSMQQARRISDRTAFFLMGELVEHDDTQVIFSNPRDDRTRGYVNGDFG</sequence>
<name>PSTB2_VIBCH</name>
<comment type="function">
    <text evidence="1">Part of the ABC transporter complex PstSACB involved in phosphate import. Responsible for energy coupling to the transport system.</text>
</comment>
<comment type="catalytic activity">
    <reaction evidence="1">
        <text>phosphate(out) + ATP + H2O = ADP + 2 phosphate(in) + H(+)</text>
        <dbReference type="Rhea" id="RHEA:24440"/>
        <dbReference type="ChEBI" id="CHEBI:15377"/>
        <dbReference type="ChEBI" id="CHEBI:15378"/>
        <dbReference type="ChEBI" id="CHEBI:30616"/>
        <dbReference type="ChEBI" id="CHEBI:43474"/>
        <dbReference type="ChEBI" id="CHEBI:456216"/>
        <dbReference type="EC" id="7.3.2.1"/>
    </reaction>
</comment>
<comment type="subunit">
    <text evidence="1">The complex is composed of two ATP-binding proteins (PstB), two transmembrane proteins (PstC and PstA) and a solute-binding protein (PstS).</text>
</comment>
<comment type="subcellular location">
    <subcellularLocation>
        <location evidence="1">Cell inner membrane</location>
        <topology evidence="1">Peripheral membrane protein</topology>
    </subcellularLocation>
</comment>
<comment type="similarity">
    <text evidence="1">Belongs to the ABC transporter superfamily. Phosphate importer (TC 3.A.1.7) family.</text>
</comment>
<keyword id="KW-0067">ATP-binding</keyword>
<keyword id="KW-0997">Cell inner membrane</keyword>
<keyword id="KW-1003">Cell membrane</keyword>
<keyword id="KW-0472">Membrane</keyword>
<keyword id="KW-0547">Nucleotide-binding</keyword>
<keyword id="KW-0592">Phosphate transport</keyword>
<keyword id="KW-1185">Reference proteome</keyword>
<keyword id="KW-1278">Translocase</keyword>
<keyword id="KW-0813">Transport</keyword>
<accession>Q9KN92</accession>
<reference key="1">
    <citation type="journal article" date="2000" name="Nature">
        <title>DNA sequence of both chromosomes of the cholera pathogen Vibrio cholerae.</title>
        <authorList>
            <person name="Heidelberg J.F."/>
            <person name="Eisen J.A."/>
            <person name="Nelson W.C."/>
            <person name="Clayton R.A."/>
            <person name="Gwinn M.L."/>
            <person name="Dodson R.J."/>
            <person name="Haft D.H."/>
            <person name="Hickey E.K."/>
            <person name="Peterson J.D."/>
            <person name="Umayam L.A."/>
            <person name="Gill S.R."/>
            <person name="Nelson K.E."/>
            <person name="Read T.D."/>
            <person name="Tettelin H."/>
            <person name="Richardson D.L."/>
            <person name="Ermolaeva M.D."/>
            <person name="Vamathevan J.J."/>
            <person name="Bass S."/>
            <person name="Qin H."/>
            <person name="Dragoi I."/>
            <person name="Sellers P."/>
            <person name="McDonald L.A."/>
            <person name="Utterback T.R."/>
            <person name="Fleischmann R.D."/>
            <person name="Nierman W.C."/>
            <person name="White O."/>
            <person name="Salzberg S.L."/>
            <person name="Smith H.O."/>
            <person name="Colwell R.R."/>
            <person name="Mekalanos J.J."/>
            <person name="Venter J.C."/>
            <person name="Fraser C.M."/>
        </authorList>
    </citation>
    <scope>NUCLEOTIDE SEQUENCE [LARGE SCALE GENOMIC DNA]</scope>
    <source>
        <strain>ATCC 39315 / El Tor Inaba N16961</strain>
    </source>
</reference>